<gene>
    <name evidence="8" type="primary">Plpp5</name>
</gene>
<keyword id="KW-0025">Alternative splicing</keyword>
<keyword id="KW-1003">Cell membrane</keyword>
<keyword id="KW-0378">Hydrolase</keyword>
<keyword id="KW-0443">Lipid metabolism</keyword>
<keyword id="KW-0472">Membrane</keyword>
<keyword id="KW-1185">Reference proteome</keyword>
<keyword id="KW-0812">Transmembrane</keyword>
<keyword id="KW-1133">Transmembrane helix</keyword>
<reference key="1">
    <citation type="journal article" date="2005" name="Science">
        <title>The transcriptional landscape of the mammalian genome.</title>
        <authorList>
            <person name="Carninci P."/>
            <person name="Kasukawa T."/>
            <person name="Katayama S."/>
            <person name="Gough J."/>
            <person name="Frith M.C."/>
            <person name="Maeda N."/>
            <person name="Oyama R."/>
            <person name="Ravasi T."/>
            <person name="Lenhard B."/>
            <person name="Wells C."/>
            <person name="Kodzius R."/>
            <person name="Shimokawa K."/>
            <person name="Bajic V.B."/>
            <person name="Brenner S.E."/>
            <person name="Batalov S."/>
            <person name="Forrest A.R."/>
            <person name="Zavolan M."/>
            <person name="Davis M.J."/>
            <person name="Wilming L.G."/>
            <person name="Aidinis V."/>
            <person name="Allen J.E."/>
            <person name="Ambesi-Impiombato A."/>
            <person name="Apweiler R."/>
            <person name="Aturaliya R.N."/>
            <person name="Bailey T.L."/>
            <person name="Bansal M."/>
            <person name="Baxter L."/>
            <person name="Beisel K.W."/>
            <person name="Bersano T."/>
            <person name="Bono H."/>
            <person name="Chalk A.M."/>
            <person name="Chiu K.P."/>
            <person name="Choudhary V."/>
            <person name="Christoffels A."/>
            <person name="Clutterbuck D.R."/>
            <person name="Crowe M.L."/>
            <person name="Dalla E."/>
            <person name="Dalrymple B.P."/>
            <person name="de Bono B."/>
            <person name="Della Gatta G."/>
            <person name="di Bernardo D."/>
            <person name="Down T."/>
            <person name="Engstrom P."/>
            <person name="Fagiolini M."/>
            <person name="Faulkner G."/>
            <person name="Fletcher C.F."/>
            <person name="Fukushima T."/>
            <person name="Furuno M."/>
            <person name="Futaki S."/>
            <person name="Gariboldi M."/>
            <person name="Georgii-Hemming P."/>
            <person name="Gingeras T.R."/>
            <person name="Gojobori T."/>
            <person name="Green R.E."/>
            <person name="Gustincich S."/>
            <person name="Harbers M."/>
            <person name="Hayashi Y."/>
            <person name="Hensch T.K."/>
            <person name="Hirokawa N."/>
            <person name="Hill D."/>
            <person name="Huminiecki L."/>
            <person name="Iacono M."/>
            <person name="Ikeo K."/>
            <person name="Iwama A."/>
            <person name="Ishikawa T."/>
            <person name="Jakt M."/>
            <person name="Kanapin A."/>
            <person name="Katoh M."/>
            <person name="Kawasawa Y."/>
            <person name="Kelso J."/>
            <person name="Kitamura H."/>
            <person name="Kitano H."/>
            <person name="Kollias G."/>
            <person name="Krishnan S.P."/>
            <person name="Kruger A."/>
            <person name="Kummerfeld S.K."/>
            <person name="Kurochkin I.V."/>
            <person name="Lareau L.F."/>
            <person name="Lazarevic D."/>
            <person name="Lipovich L."/>
            <person name="Liu J."/>
            <person name="Liuni S."/>
            <person name="McWilliam S."/>
            <person name="Madan Babu M."/>
            <person name="Madera M."/>
            <person name="Marchionni L."/>
            <person name="Matsuda H."/>
            <person name="Matsuzawa S."/>
            <person name="Miki H."/>
            <person name="Mignone F."/>
            <person name="Miyake S."/>
            <person name="Morris K."/>
            <person name="Mottagui-Tabar S."/>
            <person name="Mulder N."/>
            <person name="Nakano N."/>
            <person name="Nakauchi H."/>
            <person name="Ng P."/>
            <person name="Nilsson R."/>
            <person name="Nishiguchi S."/>
            <person name="Nishikawa S."/>
            <person name="Nori F."/>
            <person name="Ohara O."/>
            <person name="Okazaki Y."/>
            <person name="Orlando V."/>
            <person name="Pang K.C."/>
            <person name="Pavan W.J."/>
            <person name="Pavesi G."/>
            <person name="Pesole G."/>
            <person name="Petrovsky N."/>
            <person name="Piazza S."/>
            <person name="Reed J."/>
            <person name="Reid J.F."/>
            <person name="Ring B.Z."/>
            <person name="Ringwald M."/>
            <person name="Rost B."/>
            <person name="Ruan Y."/>
            <person name="Salzberg S.L."/>
            <person name="Sandelin A."/>
            <person name="Schneider C."/>
            <person name="Schoenbach C."/>
            <person name="Sekiguchi K."/>
            <person name="Semple C.A."/>
            <person name="Seno S."/>
            <person name="Sessa L."/>
            <person name="Sheng Y."/>
            <person name="Shibata Y."/>
            <person name="Shimada H."/>
            <person name="Shimada K."/>
            <person name="Silva D."/>
            <person name="Sinclair B."/>
            <person name="Sperling S."/>
            <person name="Stupka E."/>
            <person name="Sugiura K."/>
            <person name="Sultana R."/>
            <person name="Takenaka Y."/>
            <person name="Taki K."/>
            <person name="Tammoja K."/>
            <person name="Tan S.L."/>
            <person name="Tang S."/>
            <person name="Taylor M.S."/>
            <person name="Tegner J."/>
            <person name="Teichmann S.A."/>
            <person name="Ueda H.R."/>
            <person name="van Nimwegen E."/>
            <person name="Verardo R."/>
            <person name="Wei C.L."/>
            <person name="Yagi K."/>
            <person name="Yamanishi H."/>
            <person name="Zabarovsky E."/>
            <person name="Zhu S."/>
            <person name="Zimmer A."/>
            <person name="Hide W."/>
            <person name="Bult C."/>
            <person name="Grimmond S.M."/>
            <person name="Teasdale R.D."/>
            <person name="Liu E.T."/>
            <person name="Brusic V."/>
            <person name="Quackenbush J."/>
            <person name="Wahlestedt C."/>
            <person name="Mattick J.S."/>
            <person name="Hume D.A."/>
            <person name="Kai C."/>
            <person name="Sasaki D."/>
            <person name="Tomaru Y."/>
            <person name="Fukuda S."/>
            <person name="Kanamori-Katayama M."/>
            <person name="Suzuki M."/>
            <person name="Aoki J."/>
            <person name="Arakawa T."/>
            <person name="Iida J."/>
            <person name="Imamura K."/>
            <person name="Itoh M."/>
            <person name="Kato T."/>
            <person name="Kawaji H."/>
            <person name="Kawagashira N."/>
            <person name="Kawashima T."/>
            <person name="Kojima M."/>
            <person name="Kondo S."/>
            <person name="Konno H."/>
            <person name="Nakano K."/>
            <person name="Ninomiya N."/>
            <person name="Nishio T."/>
            <person name="Okada M."/>
            <person name="Plessy C."/>
            <person name="Shibata K."/>
            <person name="Shiraki T."/>
            <person name="Suzuki S."/>
            <person name="Tagami M."/>
            <person name="Waki K."/>
            <person name="Watahiki A."/>
            <person name="Okamura-Oho Y."/>
            <person name="Suzuki H."/>
            <person name="Kawai J."/>
            <person name="Hayashizaki Y."/>
        </authorList>
    </citation>
    <scope>NUCLEOTIDE SEQUENCE [LARGE SCALE MRNA] (ISOFORM 1)</scope>
    <source>
        <tissue>Lung</tissue>
    </source>
</reference>
<reference key="2">
    <citation type="journal article" date="2004" name="Genome Res.">
        <title>The status, quality, and expansion of the NIH full-length cDNA project: the Mammalian Gene Collection (MGC).</title>
        <authorList>
            <consortium name="The MGC Project Team"/>
        </authorList>
    </citation>
    <scope>NUCLEOTIDE SEQUENCE [LARGE SCALE MRNA] OF 4-260 (ISOFORM 2)</scope>
    <source>
        <tissue>Placenta</tissue>
    </source>
</reference>
<reference key="3">
    <citation type="journal article" date="2018" name="Int. J. Mol. Sci.">
        <title>Mining the Plasma Cell Transcriptome for Novel Cell Surface Proteins.</title>
        <authorList>
            <person name="Trezise S."/>
            <person name="Karnowski A."/>
            <person name="Fedele P.L."/>
            <person name="Mithraprabhu S."/>
            <person name="Liao Y."/>
            <person name="D'Costa K."/>
            <person name="Kueh A.J."/>
            <person name="Hardy M.P."/>
            <person name="Owczarek C.M."/>
            <person name="Herold M.J."/>
            <person name="Spencer A."/>
            <person name="Shi W."/>
            <person name="Willis S.N."/>
            <person name="Nutt S.L."/>
            <person name="Corcoran L.M."/>
        </authorList>
    </citation>
    <scope>SUBCELLULAR LOCATION</scope>
    <scope>TOPOLOGY</scope>
    <scope>TISSUE SPECIFICITY</scope>
    <scope>DISRUPTION PHENOTYPE</scope>
</reference>
<dbReference type="EC" id="3.1.3.4" evidence="2"/>
<dbReference type="EC" id="3.6.1.75" evidence="2"/>
<dbReference type="EMBL" id="AK144593">
    <property type="protein sequence ID" value="BAE25955.1"/>
    <property type="molecule type" value="mRNA"/>
</dbReference>
<dbReference type="EMBL" id="BC099489">
    <property type="protein sequence ID" value="AAH99489.1"/>
    <property type="molecule type" value="mRNA"/>
</dbReference>
<dbReference type="CCDS" id="CCDS40306.1">
    <molecule id="Q3UMZ3-1"/>
</dbReference>
<dbReference type="CCDS" id="CCDS80868.1">
    <molecule id="Q3UMZ3-2"/>
</dbReference>
<dbReference type="RefSeq" id="NP_001280632.1">
    <molecule id="Q3UMZ3-2"/>
    <property type="nucleotide sequence ID" value="NM_001293703.1"/>
</dbReference>
<dbReference type="RefSeq" id="NP_082276.1">
    <molecule id="Q3UMZ3-1"/>
    <property type="nucleotide sequence ID" value="NM_028000.1"/>
</dbReference>
<dbReference type="SMR" id="Q3UMZ3"/>
<dbReference type="BioGRID" id="215023">
    <property type="interactions" value="1"/>
</dbReference>
<dbReference type="FunCoup" id="Q3UMZ3">
    <property type="interactions" value="1201"/>
</dbReference>
<dbReference type="STRING" id="10090.ENSMUSP00000067035"/>
<dbReference type="PhosphoSitePlus" id="Q3UMZ3"/>
<dbReference type="PaxDb" id="10090-ENSMUSP00000067035"/>
<dbReference type="ProteomicsDB" id="289692">
    <molecule id="Q3UMZ3-1"/>
</dbReference>
<dbReference type="ProteomicsDB" id="289693">
    <molecule id="Q3UMZ3-2"/>
</dbReference>
<dbReference type="Pumba" id="Q3UMZ3"/>
<dbReference type="Antibodypedia" id="23567">
    <property type="antibodies" value="95 antibodies from 25 providers"/>
</dbReference>
<dbReference type="DNASU" id="71910"/>
<dbReference type="Ensembl" id="ENSMUST00000068916.16">
    <molecule id="Q3UMZ3-1"/>
    <property type="protein sequence ID" value="ENSMUSP00000067035.9"/>
    <property type="gene ID" value="ENSMUSG00000031570.18"/>
</dbReference>
<dbReference type="Ensembl" id="ENSMUST00000139836.8">
    <molecule id="Q3UMZ3-2"/>
    <property type="protein sequence ID" value="ENSMUSP00000122437.2"/>
    <property type="gene ID" value="ENSMUSG00000031570.18"/>
</dbReference>
<dbReference type="GeneID" id="71910"/>
<dbReference type="KEGG" id="mmu:71910"/>
<dbReference type="UCSC" id="uc009lgr.1">
    <molecule id="Q3UMZ3-1"/>
    <property type="organism name" value="mouse"/>
</dbReference>
<dbReference type="UCSC" id="uc009lgs.1">
    <molecule id="Q3UMZ3-2"/>
    <property type="organism name" value="mouse"/>
</dbReference>
<dbReference type="AGR" id="MGI:1919160"/>
<dbReference type="CTD" id="84513"/>
<dbReference type="MGI" id="MGI:1919160">
    <property type="gene designation" value="Plpp5"/>
</dbReference>
<dbReference type="VEuPathDB" id="HostDB:ENSMUSG00000031570"/>
<dbReference type="eggNOG" id="KOG3030">
    <property type="taxonomic scope" value="Eukaryota"/>
</dbReference>
<dbReference type="GeneTree" id="ENSGT00940000159772"/>
<dbReference type="HOGENOM" id="CLU_021458_5_4_1"/>
<dbReference type="InParanoid" id="Q3UMZ3"/>
<dbReference type="OMA" id="CTPLIVI"/>
<dbReference type="OrthoDB" id="10030083at2759"/>
<dbReference type="PhylomeDB" id="Q3UMZ3"/>
<dbReference type="TreeFam" id="TF323722"/>
<dbReference type="Reactome" id="R-MMU-2029485">
    <property type="pathway name" value="Role of phospholipids in phagocytosis"/>
</dbReference>
<dbReference type="UniPathway" id="UPA00085"/>
<dbReference type="BioGRID-ORCS" id="71910">
    <property type="hits" value="0 hits in 46 CRISPR screens"/>
</dbReference>
<dbReference type="ChiTaRS" id="Plpp5">
    <property type="organism name" value="mouse"/>
</dbReference>
<dbReference type="PRO" id="PR:Q3UMZ3"/>
<dbReference type="Proteomes" id="UP000000589">
    <property type="component" value="Chromosome 8"/>
</dbReference>
<dbReference type="RNAct" id="Q3UMZ3">
    <property type="molecule type" value="protein"/>
</dbReference>
<dbReference type="Bgee" id="ENSMUSG00000031570">
    <property type="expression patterns" value="Expressed in pancreas and 67 other cell types or tissues"/>
</dbReference>
<dbReference type="ExpressionAtlas" id="Q3UMZ3">
    <property type="expression patterns" value="baseline and differential"/>
</dbReference>
<dbReference type="GO" id="GO:0005886">
    <property type="term" value="C:plasma membrane"/>
    <property type="evidence" value="ECO:0007669"/>
    <property type="project" value="UniProtKB-SubCell"/>
</dbReference>
<dbReference type="GO" id="GO:0000810">
    <property type="term" value="F:diacylglycerol diphosphate phosphatase activity"/>
    <property type="evidence" value="ECO:0000250"/>
    <property type="project" value="UniProtKB"/>
</dbReference>
<dbReference type="GO" id="GO:0008195">
    <property type="term" value="F:phosphatidate phosphatase activity"/>
    <property type="evidence" value="ECO:0000250"/>
    <property type="project" value="UniProtKB"/>
</dbReference>
<dbReference type="GO" id="GO:0046839">
    <property type="term" value="P:phospholipid dephosphorylation"/>
    <property type="evidence" value="ECO:0000250"/>
    <property type="project" value="UniProtKB"/>
</dbReference>
<dbReference type="GO" id="GO:0006644">
    <property type="term" value="P:phospholipid metabolic process"/>
    <property type="evidence" value="ECO:0007669"/>
    <property type="project" value="UniProtKB-UniPathway"/>
</dbReference>
<dbReference type="CDD" id="cd03390">
    <property type="entry name" value="PAP2_containing_1_like"/>
    <property type="match status" value="1"/>
</dbReference>
<dbReference type="FunFam" id="1.20.144.10:FF:000022">
    <property type="entry name" value="Phospholipid phosphatase 5"/>
    <property type="match status" value="1"/>
</dbReference>
<dbReference type="Gene3D" id="1.20.144.10">
    <property type="entry name" value="Phosphatidic acid phosphatase type 2/haloperoxidase"/>
    <property type="match status" value="1"/>
</dbReference>
<dbReference type="InterPro" id="IPR036938">
    <property type="entry name" value="P_Acid_Pase_2/haloperoxi_sf"/>
</dbReference>
<dbReference type="InterPro" id="IPR000326">
    <property type="entry name" value="P_Acid_Pase_2/haloperoxidase"/>
</dbReference>
<dbReference type="InterPro" id="IPR043216">
    <property type="entry name" value="PA_PP_rel"/>
</dbReference>
<dbReference type="PANTHER" id="PTHR10165">
    <property type="entry name" value="LIPID PHOSPHATE PHOSPHATASE"/>
    <property type="match status" value="1"/>
</dbReference>
<dbReference type="PANTHER" id="PTHR10165:SF87">
    <property type="entry name" value="PHOSPHOLIPID PHOSPHATASE 5"/>
    <property type="match status" value="1"/>
</dbReference>
<dbReference type="Pfam" id="PF01569">
    <property type="entry name" value="PAP2"/>
    <property type="match status" value="1"/>
</dbReference>
<dbReference type="SMART" id="SM00014">
    <property type="entry name" value="acidPPc"/>
    <property type="match status" value="1"/>
</dbReference>
<dbReference type="SUPFAM" id="SSF48317">
    <property type="entry name" value="Acid phosphatase/Vanadium-dependent haloperoxidase"/>
    <property type="match status" value="1"/>
</dbReference>
<feature type="chain" id="PRO_0000286946" description="Phospholipid phosphatase 5">
    <location>
        <begin position="1"/>
        <end position="260"/>
    </location>
</feature>
<feature type="topological domain" description="Extracellular" evidence="4">
    <location>
        <begin position="1"/>
        <end position="50"/>
    </location>
</feature>
<feature type="transmembrane region" description="Helical" evidence="3">
    <location>
        <begin position="51"/>
        <end position="71"/>
    </location>
</feature>
<feature type="topological domain" description="Cytoplasmic" evidence="7">
    <location>
        <begin position="72"/>
        <end position="86"/>
    </location>
</feature>
<feature type="transmembrane region" description="Helical" evidence="3">
    <location>
        <begin position="87"/>
        <end position="107"/>
    </location>
</feature>
<feature type="topological domain" description="Extracellular" evidence="7">
    <location>
        <begin position="108"/>
        <end position="150"/>
    </location>
</feature>
<feature type="transmembrane region" description="Helical" evidence="3">
    <location>
        <begin position="151"/>
        <end position="171"/>
    </location>
</feature>
<feature type="topological domain" description="Cytoplasmic" evidence="7">
    <location>
        <begin position="172"/>
        <end position="175"/>
    </location>
</feature>
<feature type="transmembrane region" description="Helical" evidence="3">
    <location>
        <begin position="176"/>
        <end position="196"/>
    </location>
</feature>
<feature type="topological domain" description="Extracellular" evidence="7">
    <location>
        <begin position="197"/>
        <end position="205"/>
    </location>
</feature>
<feature type="transmembrane region" description="Helical" evidence="3">
    <location>
        <begin position="206"/>
        <end position="223"/>
    </location>
</feature>
<feature type="topological domain" description="Cytoplasmic" evidence="4">
    <location>
        <begin position="224"/>
        <end position="260"/>
    </location>
</feature>
<feature type="region of interest" description="Phosphatase sequence motif I" evidence="2">
    <location>
        <begin position="104"/>
        <end position="112"/>
    </location>
</feature>
<feature type="region of interest" description="Phosphatase sequence motif II" evidence="2">
    <location>
        <begin position="145"/>
        <end position="148"/>
    </location>
</feature>
<feature type="region of interest" description="Phosphatase sequence motif III" evidence="2">
    <location>
        <begin position="197"/>
        <end position="207"/>
    </location>
</feature>
<feature type="active site" description="Proton donors" evidence="1">
    <location>
        <position position="148"/>
    </location>
</feature>
<feature type="active site" description="Nucleophile" evidence="1">
    <location>
        <position position="204"/>
    </location>
</feature>
<feature type="site" description="Stabilizes the active site histidine for nucleophilic attack" evidence="1">
    <location>
        <position position="208"/>
    </location>
</feature>
<feature type="splice variant" id="VSP_025243" description="In isoform 2." evidence="5">
    <original>DVLVGSMIGMTFAYVCYRQ</original>
    <variation>GWYKDMHRCSQLFMRVLGI</variation>
    <location>
        <begin position="208"/>
        <end position="226"/>
    </location>
</feature>
<feature type="splice variant" id="VSP_025244" description="In isoform 2." evidence="5">
    <location>
        <begin position="227"/>
        <end position="260"/>
    </location>
</feature>
<protein>
    <recommendedName>
        <fullName evidence="2">Phospholipid phosphatase 5</fullName>
        <ecNumber evidence="2">3.1.3.4</ecNumber>
        <ecNumber evidence="2">3.6.1.75</ecNumber>
    </recommendedName>
</protein>
<accession>Q3UMZ3</accession>
<accession>Q4KL19</accession>
<organism>
    <name type="scientific">Mus musculus</name>
    <name type="common">Mouse</name>
    <dbReference type="NCBI Taxonomy" id="10090"/>
    <lineage>
        <taxon>Eukaryota</taxon>
        <taxon>Metazoa</taxon>
        <taxon>Chordata</taxon>
        <taxon>Craniata</taxon>
        <taxon>Vertebrata</taxon>
        <taxon>Euteleostomi</taxon>
        <taxon>Mammalia</taxon>
        <taxon>Eutheria</taxon>
        <taxon>Euarchontoglires</taxon>
        <taxon>Glires</taxon>
        <taxon>Rodentia</taxon>
        <taxon>Myomorpha</taxon>
        <taxon>Muroidea</taxon>
        <taxon>Muridae</taxon>
        <taxon>Murinae</taxon>
        <taxon>Mus</taxon>
        <taxon>Mus</taxon>
    </lineage>
</organism>
<sequence length="260" mass="29223">MGTAALGAELGVRVLLFVAFLVTELLPPFQRRIQPEELWLYRNPYVEAEYFPTGRMFVIAFLTPLSLIFLAKFLRKADATDSKQACLAASLALALNGVFTNIIKLIVGRPRPDFFYRCFPDGLAHSDLTCTGDEDVVNEGRKSFPSGHSSFAFAGLAFASFYLAGKLHCFTPQGRGKSWRLCAFLSPLLFAAVIALSRTCDYKHHWQDVLVGSMIGMTFAYVCYRQYYPPLTDVECHKPFQDKHKLPSSQKPSELHHLEI</sequence>
<evidence type="ECO:0000250" key="1">
    <source>
        <dbReference type="UniProtKB" id="O34349"/>
    </source>
</evidence>
<evidence type="ECO:0000250" key="2">
    <source>
        <dbReference type="UniProtKB" id="Q8NEB5"/>
    </source>
</evidence>
<evidence type="ECO:0000255" key="3"/>
<evidence type="ECO:0000269" key="4">
    <source>
    </source>
</evidence>
<evidence type="ECO:0000303" key="5">
    <source>
    </source>
</evidence>
<evidence type="ECO:0000305" key="6"/>
<evidence type="ECO:0000305" key="7">
    <source>
    </source>
</evidence>
<evidence type="ECO:0000312" key="8">
    <source>
        <dbReference type="MGI" id="MGI:1919160"/>
    </source>
</evidence>
<name>PLPP5_MOUSE</name>
<comment type="function">
    <text evidence="2">Magnesium-independent phospholipid phosphatase with broad substrate specificity. Preferentially catalyzes the conversion of diacylglycerol pyrophosphate into phosphatidate but can also act on phosphatidate and lysophosphatidate. Phospholipid phosphatases are involved in both the synthesis of lipids and the generation or degradation of lipid-signaling molecules.</text>
</comment>
<comment type="catalytic activity">
    <reaction evidence="2">
        <text>a 1,2-diacyl-sn-glycerol 3-diphosphate + H2O = a 1,2-diacyl-sn-glycero-3-phosphate + phosphate + H(+)</text>
        <dbReference type="Rhea" id="RHEA:27449"/>
        <dbReference type="ChEBI" id="CHEBI:15377"/>
        <dbReference type="ChEBI" id="CHEBI:15378"/>
        <dbReference type="ChEBI" id="CHEBI:43474"/>
        <dbReference type="ChEBI" id="CHEBI:58608"/>
        <dbReference type="ChEBI" id="CHEBI:59996"/>
        <dbReference type="EC" id="3.6.1.75"/>
    </reaction>
    <physiologicalReaction direction="left-to-right" evidence="2">
        <dbReference type="Rhea" id="RHEA:27450"/>
    </physiologicalReaction>
</comment>
<comment type="catalytic activity">
    <reaction evidence="2">
        <text>a 1,2-diacyl-sn-glycero-3-phosphate + H2O = a 1,2-diacyl-sn-glycerol + phosphate</text>
        <dbReference type="Rhea" id="RHEA:27429"/>
        <dbReference type="ChEBI" id="CHEBI:15377"/>
        <dbReference type="ChEBI" id="CHEBI:17815"/>
        <dbReference type="ChEBI" id="CHEBI:43474"/>
        <dbReference type="ChEBI" id="CHEBI:58608"/>
        <dbReference type="EC" id="3.1.3.4"/>
    </reaction>
    <physiologicalReaction direction="left-to-right" evidence="2">
        <dbReference type="Rhea" id="RHEA:27430"/>
    </physiologicalReaction>
</comment>
<comment type="catalytic activity">
    <reaction evidence="2">
        <text>1,2-dioctanoyl-sn-glycero-3-diphosphate + H2O = 1,2-dioctanoyl-sn-glycero-3-phosphate + phosphate + H(+)</text>
        <dbReference type="Rhea" id="RHEA:42856"/>
        <dbReference type="ChEBI" id="CHEBI:15377"/>
        <dbReference type="ChEBI" id="CHEBI:15378"/>
        <dbReference type="ChEBI" id="CHEBI:43474"/>
        <dbReference type="ChEBI" id="CHEBI:78229"/>
        <dbReference type="ChEBI" id="CHEBI:82765"/>
    </reaction>
    <physiologicalReaction direction="left-to-right" evidence="2">
        <dbReference type="Rhea" id="RHEA:42857"/>
    </physiologicalReaction>
</comment>
<comment type="catalytic activity">
    <reaction evidence="2">
        <text>1,2-dioctanoyl-sn-glycero-3-phosphate + H2O = 1,2-dioctanoyl-sn-glycerol + phosphate</text>
        <dbReference type="Rhea" id="RHEA:42860"/>
        <dbReference type="ChEBI" id="CHEBI:15377"/>
        <dbReference type="ChEBI" id="CHEBI:43474"/>
        <dbReference type="ChEBI" id="CHEBI:76979"/>
        <dbReference type="ChEBI" id="CHEBI:78229"/>
    </reaction>
    <physiologicalReaction direction="left-to-right" evidence="2">
        <dbReference type="Rhea" id="RHEA:42861"/>
    </physiologicalReaction>
</comment>
<comment type="catalytic activity">
    <reaction evidence="2">
        <text>1-(9Z-octadecenoyl)-sn-glycero-3-phosphate + H2O = 1-(9Z-octadecenoyl)-sn-glycerol + phosphate</text>
        <dbReference type="Rhea" id="RHEA:39835"/>
        <dbReference type="ChEBI" id="CHEBI:15377"/>
        <dbReference type="ChEBI" id="CHEBI:43474"/>
        <dbReference type="ChEBI" id="CHEBI:74544"/>
        <dbReference type="ChEBI" id="CHEBI:75757"/>
    </reaction>
    <physiologicalReaction direction="left-to-right" evidence="2">
        <dbReference type="Rhea" id="RHEA:39836"/>
    </physiologicalReaction>
</comment>
<comment type="activity regulation">
    <text evidence="2">Magnesium-independent phospholipid phosphatase. Inhibited by N-ethylmaleimide.</text>
</comment>
<comment type="pathway">
    <text evidence="2">Lipid metabolism; phospholipid metabolism.</text>
</comment>
<comment type="subcellular location">
    <subcellularLocation>
        <location evidence="4">Cell membrane</location>
        <topology evidence="4">Multi-pass membrane protein</topology>
    </subcellularLocation>
</comment>
<comment type="alternative products">
    <event type="alternative splicing"/>
    <isoform>
        <id>Q3UMZ3-1</id>
        <name>1</name>
        <sequence type="displayed"/>
    </isoform>
    <isoform>
        <id>Q3UMZ3-2</id>
        <name>2</name>
        <sequence type="described" ref="VSP_025243 VSP_025244"/>
    </isoform>
</comment>
<comment type="tissue specificity">
    <text evidence="4">Specifically expressed by antibody-secreting immune cells.</text>
</comment>
<comment type="disruption phenotype">
    <text evidence="4">Mice lacking Plpp5 are viable and display no overt physical defect.</text>
</comment>
<comment type="similarity">
    <text evidence="6">Belongs to the PA-phosphatase related phosphoesterase family.</text>
</comment>
<proteinExistence type="evidence at protein level"/>